<reference key="1">
    <citation type="submission" date="2005-08" db="EMBL/GenBank/DDBJ databases">
        <authorList>
            <consortium name="NIH - Mammalian Gene Collection (MGC) project"/>
        </authorList>
    </citation>
    <scope>NUCLEOTIDE SEQUENCE [LARGE SCALE MRNA]</scope>
    <source>
        <strain>Hereford</strain>
        <tissue>Thymus</tissue>
    </source>
</reference>
<protein>
    <recommendedName>
        <fullName>Stress-associated endoplasmic reticulum protein 1</fullName>
    </recommendedName>
    <alternativeName>
        <fullName>Ribosome-attached membrane protein 4</fullName>
    </alternativeName>
</protein>
<keyword id="KW-0256">Endoplasmic reticulum</keyword>
<keyword id="KW-0472">Membrane</keyword>
<keyword id="KW-1185">Reference proteome</keyword>
<keyword id="KW-0812">Transmembrane</keyword>
<keyword id="KW-1133">Transmembrane helix</keyword>
<keyword id="KW-0834">Unfolded protein response</keyword>
<name>SERP1_BOVIN</name>
<proteinExistence type="inferred from homology"/>
<accession>Q3ZBR1</accession>
<gene>
    <name type="primary">SERP1</name>
    <name type="synonym">RAMP4</name>
</gene>
<sequence>MVAKQRIRMANEKHSKNITQRGNVAKTSRNAPEEKASVGPWLLALFIFVVCGSAIFQIIQSIRMGM</sequence>
<comment type="function">
    <text evidence="1">Interacts with target proteins during their translocation into the lumen of the endoplasmic reticulum. Protects unfolded target proteins against degradation during ER stress. May facilitate glycosylation of target proteins after termination of ER stress. May modulate the use of N-glycosylation sites on target proteins.</text>
</comment>
<comment type="subunit">
    <text evidence="1">Interacts with SEC61B, SEC61A1 and the SEC61 complex. Interacts with CANX.</text>
</comment>
<comment type="subcellular location">
    <subcellularLocation>
        <location evidence="1">Membrane</location>
        <topology evidence="1">Single-pass membrane protein</topology>
    </subcellularLocation>
    <subcellularLocation>
        <location evidence="1">Endoplasmic reticulum membrane</location>
        <topology evidence="1">Single-pass membrane protein</topology>
    </subcellularLocation>
</comment>
<comment type="similarity">
    <text evidence="4">Belongs to the RAMP4 family.</text>
</comment>
<dbReference type="EMBL" id="BC103162">
    <property type="protein sequence ID" value="AAI03163.1"/>
    <property type="molecule type" value="mRNA"/>
</dbReference>
<dbReference type="RefSeq" id="NP_001107555.1">
    <property type="nucleotide sequence ID" value="NM_001114083.2"/>
</dbReference>
<dbReference type="SMR" id="Q3ZBR1"/>
<dbReference type="FunCoup" id="Q3ZBR1">
    <property type="interactions" value="1499"/>
</dbReference>
<dbReference type="STRING" id="9913.ENSBTAP00000012000"/>
<dbReference type="PaxDb" id="9913-ENSBTAP00000012000"/>
<dbReference type="Ensembl" id="ENSBTAT00000012000.5">
    <property type="protein sequence ID" value="ENSBTAP00000012000.4"/>
    <property type="gene ID" value="ENSBTAG00000009104.6"/>
</dbReference>
<dbReference type="GeneID" id="528100"/>
<dbReference type="KEGG" id="bta:528100"/>
<dbReference type="CTD" id="27230"/>
<dbReference type="VEuPathDB" id="HostDB:ENSBTAG00000009104"/>
<dbReference type="VGNC" id="VGNC:34464">
    <property type="gene designation" value="SERP1"/>
</dbReference>
<dbReference type="eggNOG" id="KOG3491">
    <property type="taxonomic scope" value="Eukaryota"/>
</dbReference>
<dbReference type="GeneTree" id="ENSGT00940000161729"/>
<dbReference type="HOGENOM" id="CLU_160944_3_0_1"/>
<dbReference type="InParanoid" id="Q3ZBR1"/>
<dbReference type="OMA" id="KSNDAFH"/>
<dbReference type="OrthoDB" id="16679at2759"/>
<dbReference type="TreeFam" id="TF313229"/>
<dbReference type="Reactome" id="R-BTA-9609523">
    <property type="pathway name" value="Insertion of tail-anchored proteins into the endoplasmic reticulum membrane"/>
</dbReference>
<dbReference type="Proteomes" id="UP000009136">
    <property type="component" value="Chromosome 1"/>
</dbReference>
<dbReference type="Bgee" id="ENSBTAG00000009104">
    <property type="expression patterns" value="Expressed in saliva-secreting gland and 107 other cell types or tissues"/>
</dbReference>
<dbReference type="GO" id="GO:0005881">
    <property type="term" value="C:cytoplasmic microtubule"/>
    <property type="evidence" value="ECO:0000250"/>
    <property type="project" value="UniProtKB"/>
</dbReference>
<dbReference type="GO" id="GO:0005783">
    <property type="term" value="C:endoplasmic reticulum"/>
    <property type="evidence" value="ECO:0000318"/>
    <property type="project" value="GO_Central"/>
</dbReference>
<dbReference type="GO" id="GO:0005789">
    <property type="term" value="C:endoplasmic reticulum membrane"/>
    <property type="evidence" value="ECO:0007669"/>
    <property type="project" value="UniProtKB-SubCell"/>
</dbReference>
<dbReference type="GO" id="GO:0030968">
    <property type="term" value="P:endoplasmic reticulum unfolded protein response"/>
    <property type="evidence" value="ECO:0000318"/>
    <property type="project" value="GO_Central"/>
</dbReference>
<dbReference type="InterPro" id="IPR010580">
    <property type="entry name" value="ER_stress-assoc"/>
</dbReference>
<dbReference type="PANTHER" id="PTHR15601">
    <property type="entry name" value="STRESS ASSOCIATED ENDOPLASMIC RETICULUM PROTEIN SERP1/RAMP4"/>
    <property type="match status" value="1"/>
</dbReference>
<dbReference type="PANTHER" id="PTHR15601:SF14">
    <property type="entry name" value="STRESS-ASSOCIATED ENDOPLASMIC RETICULUM PROTEIN 1"/>
    <property type="match status" value="1"/>
</dbReference>
<dbReference type="Pfam" id="PF06624">
    <property type="entry name" value="RAMP4"/>
    <property type="match status" value="1"/>
</dbReference>
<feature type="chain" id="PRO_0000274793" description="Stress-associated endoplasmic reticulum protein 1">
    <location>
        <begin position="1"/>
        <end position="66"/>
    </location>
</feature>
<feature type="transmembrane region" description="Helical" evidence="2">
    <location>
        <begin position="39"/>
        <end position="59"/>
    </location>
</feature>
<feature type="region of interest" description="Disordered" evidence="3">
    <location>
        <begin position="1"/>
        <end position="31"/>
    </location>
</feature>
<feature type="compositionally biased region" description="Polar residues" evidence="3">
    <location>
        <begin position="17"/>
        <end position="30"/>
    </location>
</feature>
<evidence type="ECO:0000250" key="1">
    <source>
        <dbReference type="UniProtKB" id="Q9R2C1"/>
    </source>
</evidence>
<evidence type="ECO:0000255" key="2"/>
<evidence type="ECO:0000256" key="3">
    <source>
        <dbReference type="SAM" id="MobiDB-lite"/>
    </source>
</evidence>
<evidence type="ECO:0000305" key="4"/>
<organism>
    <name type="scientific">Bos taurus</name>
    <name type="common">Bovine</name>
    <dbReference type="NCBI Taxonomy" id="9913"/>
    <lineage>
        <taxon>Eukaryota</taxon>
        <taxon>Metazoa</taxon>
        <taxon>Chordata</taxon>
        <taxon>Craniata</taxon>
        <taxon>Vertebrata</taxon>
        <taxon>Euteleostomi</taxon>
        <taxon>Mammalia</taxon>
        <taxon>Eutheria</taxon>
        <taxon>Laurasiatheria</taxon>
        <taxon>Artiodactyla</taxon>
        <taxon>Ruminantia</taxon>
        <taxon>Pecora</taxon>
        <taxon>Bovidae</taxon>
        <taxon>Bovinae</taxon>
        <taxon>Bos</taxon>
    </lineage>
</organism>